<evidence type="ECO:0000255" key="1">
    <source>
        <dbReference type="HAMAP-Rule" id="MF_01333"/>
    </source>
</evidence>
<evidence type="ECO:0000305" key="2"/>
<name>RL5_METMA</name>
<organism>
    <name type="scientific">Methanosarcina mazei (strain ATCC BAA-159 / DSM 3647 / Goe1 / Go1 / JCM 11833 / OCM 88)</name>
    <name type="common">Methanosarcina frisia</name>
    <dbReference type="NCBI Taxonomy" id="192952"/>
    <lineage>
        <taxon>Archaea</taxon>
        <taxon>Methanobacteriati</taxon>
        <taxon>Methanobacteriota</taxon>
        <taxon>Stenosarchaea group</taxon>
        <taxon>Methanomicrobia</taxon>
        <taxon>Methanosarcinales</taxon>
        <taxon>Methanosarcinaceae</taxon>
        <taxon>Methanosarcina</taxon>
    </lineage>
</organism>
<dbReference type="EMBL" id="AE008384">
    <property type="protein sequence ID" value="AAM31833.1"/>
    <property type="molecule type" value="Genomic_DNA"/>
</dbReference>
<dbReference type="SMR" id="Q8PV37"/>
<dbReference type="KEGG" id="mma:MM_2137"/>
<dbReference type="PATRIC" id="fig|192952.21.peg.2451"/>
<dbReference type="eggNOG" id="arCOG04092">
    <property type="taxonomic scope" value="Archaea"/>
</dbReference>
<dbReference type="HOGENOM" id="CLU_061015_3_0_2"/>
<dbReference type="Proteomes" id="UP000000595">
    <property type="component" value="Chromosome"/>
</dbReference>
<dbReference type="GO" id="GO:1990904">
    <property type="term" value="C:ribonucleoprotein complex"/>
    <property type="evidence" value="ECO:0007669"/>
    <property type="project" value="UniProtKB-KW"/>
</dbReference>
<dbReference type="GO" id="GO:0005840">
    <property type="term" value="C:ribosome"/>
    <property type="evidence" value="ECO:0007669"/>
    <property type="project" value="UniProtKB-KW"/>
</dbReference>
<dbReference type="GO" id="GO:0019843">
    <property type="term" value="F:rRNA binding"/>
    <property type="evidence" value="ECO:0007669"/>
    <property type="project" value="UniProtKB-UniRule"/>
</dbReference>
<dbReference type="GO" id="GO:0003735">
    <property type="term" value="F:structural constituent of ribosome"/>
    <property type="evidence" value="ECO:0007669"/>
    <property type="project" value="InterPro"/>
</dbReference>
<dbReference type="GO" id="GO:0000049">
    <property type="term" value="F:tRNA binding"/>
    <property type="evidence" value="ECO:0007669"/>
    <property type="project" value="UniProtKB-UniRule"/>
</dbReference>
<dbReference type="GO" id="GO:0006412">
    <property type="term" value="P:translation"/>
    <property type="evidence" value="ECO:0007669"/>
    <property type="project" value="UniProtKB-UniRule"/>
</dbReference>
<dbReference type="FunFam" id="3.30.1440.10:FF:000002">
    <property type="entry name" value="60S ribosomal protein L11"/>
    <property type="match status" value="1"/>
</dbReference>
<dbReference type="Gene3D" id="3.30.1440.10">
    <property type="match status" value="1"/>
</dbReference>
<dbReference type="HAMAP" id="MF_01333_A">
    <property type="entry name" value="Ribosomal_uL5_A"/>
    <property type="match status" value="1"/>
</dbReference>
<dbReference type="InterPro" id="IPR002132">
    <property type="entry name" value="Ribosomal_uL5"/>
</dbReference>
<dbReference type="InterPro" id="IPR022804">
    <property type="entry name" value="Ribosomal_uL5_arc"/>
</dbReference>
<dbReference type="InterPro" id="IPR031309">
    <property type="entry name" value="Ribosomal_uL5_C"/>
</dbReference>
<dbReference type="InterPro" id="IPR020929">
    <property type="entry name" value="Ribosomal_uL5_CS"/>
</dbReference>
<dbReference type="InterPro" id="IPR022803">
    <property type="entry name" value="Ribosomal_uL5_dom_sf"/>
</dbReference>
<dbReference type="InterPro" id="IPR031310">
    <property type="entry name" value="Ribosomal_uL5_N"/>
</dbReference>
<dbReference type="NCBIfam" id="NF003258">
    <property type="entry name" value="PRK04219.1"/>
    <property type="match status" value="1"/>
</dbReference>
<dbReference type="PANTHER" id="PTHR11994">
    <property type="entry name" value="60S RIBOSOMAL PROTEIN L11-RELATED"/>
    <property type="match status" value="1"/>
</dbReference>
<dbReference type="Pfam" id="PF00281">
    <property type="entry name" value="Ribosomal_L5"/>
    <property type="match status" value="1"/>
</dbReference>
<dbReference type="Pfam" id="PF00673">
    <property type="entry name" value="Ribosomal_L5_C"/>
    <property type="match status" value="1"/>
</dbReference>
<dbReference type="PIRSF" id="PIRSF002161">
    <property type="entry name" value="Ribosomal_L5"/>
    <property type="match status" value="1"/>
</dbReference>
<dbReference type="SUPFAM" id="SSF55282">
    <property type="entry name" value="RL5-like"/>
    <property type="match status" value="1"/>
</dbReference>
<dbReference type="PROSITE" id="PS00358">
    <property type="entry name" value="RIBOSOMAL_L5"/>
    <property type="match status" value="1"/>
</dbReference>
<reference key="1">
    <citation type="journal article" date="2002" name="J. Mol. Microbiol. Biotechnol.">
        <title>The genome of Methanosarcina mazei: evidence for lateral gene transfer between Bacteria and Archaea.</title>
        <authorList>
            <person name="Deppenmeier U."/>
            <person name="Johann A."/>
            <person name="Hartsch T."/>
            <person name="Merkl R."/>
            <person name="Schmitz R.A."/>
            <person name="Martinez-Arias R."/>
            <person name="Henne A."/>
            <person name="Wiezer A."/>
            <person name="Baeumer S."/>
            <person name="Jacobi C."/>
            <person name="Brueggemann H."/>
            <person name="Lienard T."/>
            <person name="Christmann A."/>
            <person name="Boemecke M."/>
            <person name="Steckel S."/>
            <person name="Bhattacharyya A."/>
            <person name="Lykidis A."/>
            <person name="Overbeek R."/>
            <person name="Klenk H.-P."/>
            <person name="Gunsalus R.P."/>
            <person name="Fritz H.-J."/>
            <person name="Gottschalk G."/>
        </authorList>
    </citation>
    <scope>NUCLEOTIDE SEQUENCE [LARGE SCALE GENOMIC DNA]</scope>
    <source>
        <strain>ATCC BAA-159 / DSM 3647 / Goe1 / Go1 / JCM 11833 / OCM 88</strain>
    </source>
</reference>
<keyword id="KW-0687">Ribonucleoprotein</keyword>
<keyword id="KW-0689">Ribosomal protein</keyword>
<keyword id="KW-0694">RNA-binding</keyword>
<keyword id="KW-0699">rRNA-binding</keyword>
<keyword id="KW-0820">tRNA-binding</keyword>
<gene>
    <name evidence="1" type="primary">rpl5</name>
    <name type="ordered locus">MM_2137</name>
</gene>
<sequence length="169" mass="18925">MSNPMRTPMVEKVIVHMGVGESGQHLVNAEEILKTITGQEVVRCFAKRTLPAFSIKKNEPIGCKVTLRGQRAQEFLGTSFEIIEKTLSRAQFDSLGNVSFGIEEHTDFPGMRYDPNIGVFGMDVTVVLKRPGERICKRRIATRKIPTDHRVTVDDAIAFLNESYGVEVM</sequence>
<comment type="function">
    <text evidence="1">This is one of the proteins that bind and probably mediate the attachment of the 5S RNA into the large ribosomal subunit, where it forms part of the central protuberance. In the 70S ribosome it contacts protein S13 of the 30S subunit (bridge B1b), connecting the 2 subunits; this bridge is implicated in subunit movement. May contact the P site tRNA; the 5S rRNA and some of its associated proteins might help stabilize positioning of ribosome-bound tRNAs.</text>
</comment>
<comment type="subunit">
    <text evidence="1">Part of the 50S ribosomal subunit; contacts the 5S rRNA and probably tRNA. Forms a bridge to the 30S subunit in the 70S ribosome.</text>
</comment>
<comment type="similarity">
    <text evidence="1">Belongs to the universal ribosomal protein uL5 family.</text>
</comment>
<accession>Q8PV37</accession>
<feature type="chain" id="PRO_0000125058" description="Large ribosomal subunit protein uL5">
    <location>
        <begin position="1"/>
        <end position="169"/>
    </location>
</feature>
<protein>
    <recommendedName>
        <fullName evidence="1">Large ribosomal subunit protein uL5</fullName>
    </recommendedName>
    <alternativeName>
        <fullName evidence="2">50S ribosomal protein L5</fullName>
    </alternativeName>
</protein>
<proteinExistence type="inferred from homology"/>